<proteinExistence type="inferred from homology"/>
<gene>
    <name evidence="1" type="primary">ppa1</name>
    <name type="ordered locus">PSPTO_0722</name>
</gene>
<evidence type="ECO:0000255" key="1">
    <source>
        <dbReference type="HAMAP-Rule" id="MF_00209"/>
    </source>
</evidence>
<protein>
    <recommendedName>
        <fullName evidence="1">Inorganic pyrophosphatase 1</fullName>
        <ecNumber evidence="1">3.6.1.1</ecNumber>
    </recommendedName>
    <alternativeName>
        <fullName evidence="1">Pyrophosphate phospho-hydrolase 1</fullName>
        <shortName evidence="1">PPase 1</shortName>
    </alternativeName>
</protein>
<organism>
    <name type="scientific">Pseudomonas syringae pv. tomato (strain ATCC BAA-871 / DC3000)</name>
    <dbReference type="NCBI Taxonomy" id="223283"/>
    <lineage>
        <taxon>Bacteria</taxon>
        <taxon>Pseudomonadati</taxon>
        <taxon>Pseudomonadota</taxon>
        <taxon>Gammaproteobacteria</taxon>
        <taxon>Pseudomonadales</taxon>
        <taxon>Pseudomonadaceae</taxon>
        <taxon>Pseudomonas</taxon>
    </lineage>
</organism>
<reference key="1">
    <citation type="journal article" date="2003" name="Proc. Natl. Acad. Sci. U.S.A.">
        <title>The complete genome sequence of the Arabidopsis and tomato pathogen Pseudomonas syringae pv. tomato DC3000.</title>
        <authorList>
            <person name="Buell C.R."/>
            <person name="Joardar V."/>
            <person name="Lindeberg M."/>
            <person name="Selengut J."/>
            <person name="Paulsen I.T."/>
            <person name="Gwinn M.L."/>
            <person name="Dodson R.J."/>
            <person name="DeBoy R.T."/>
            <person name="Durkin A.S."/>
            <person name="Kolonay J.F."/>
            <person name="Madupu R."/>
            <person name="Daugherty S.C."/>
            <person name="Brinkac L.M."/>
            <person name="Beanan M.J."/>
            <person name="Haft D.H."/>
            <person name="Nelson W.C."/>
            <person name="Davidsen T.M."/>
            <person name="Zafar N."/>
            <person name="Zhou L."/>
            <person name="Liu J."/>
            <person name="Yuan Q."/>
            <person name="Khouri H.M."/>
            <person name="Fedorova N.B."/>
            <person name="Tran B."/>
            <person name="Russell D."/>
            <person name="Berry K.J."/>
            <person name="Utterback T.R."/>
            <person name="Van Aken S.E."/>
            <person name="Feldblyum T.V."/>
            <person name="D'Ascenzo M."/>
            <person name="Deng W.-L."/>
            <person name="Ramos A.R."/>
            <person name="Alfano J.R."/>
            <person name="Cartinhour S."/>
            <person name="Chatterjee A.K."/>
            <person name="Delaney T.P."/>
            <person name="Lazarowitz S.G."/>
            <person name="Martin G.B."/>
            <person name="Schneider D.J."/>
            <person name="Tang X."/>
            <person name="Bender C.L."/>
            <person name="White O."/>
            <person name="Fraser C.M."/>
            <person name="Collmer A."/>
        </authorList>
    </citation>
    <scope>NUCLEOTIDE SEQUENCE [LARGE SCALE GENOMIC DNA]</scope>
    <source>
        <strain>ATCC BAA-871 / DC3000</strain>
    </source>
</reference>
<keyword id="KW-0963">Cytoplasm</keyword>
<keyword id="KW-0378">Hydrolase</keyword>
<keyword id="KW-0460">Magnesium</keyword>
<keyword id="KW-0479">Metal-binding</keyword>
<keyword id="KW-1185">Reference proteome</keyword>
<name>IPYR1_PSESM</name>
<comment type="function">
    <text evidence="1">Catalyzes the hydrolysis of inorganic pyrophosphate (PPi) forming two phosphate ions.</text>
</comment>
<comment type="catalytic activity">
    <reaction evidence="1">
        <text>diphosphate + H2O = 2 phosphate + H(+)</text>
        <dbReference type="Rhea" id="RHEA:24576"/>
        <dbReference type="ChEBI" id="CHEBI:15377"/>
        <dbReference type="ChEBI" id="CHEBI:15378"/>
        <dbReference type="ChEBI" id="CHEBI:33019"/>
        <dbReference type="ChEBI" id="CHEBI:43474"/>
        <dbReference type="EC" id="3.6.1.1"/>
    </reaction>
</comment>
<comment type="cofactor">
    <cofactor evidence="1">
        <name>Mg(2+)</name>
        <dbReference type="ChEBI" id="CHEBI:18420"/>
    </cofactor>
</comment>
<comment type="subunit">
    <text evidence="1">Homohexamer.</text>
</comment>
<comment type="subcellular location">
    <subcellularLocation>
        <location evidence="1">Cytoplasm</location>
    </subcellularLocation>
</comment>
<comment type="similarity">
    <text evidence="1">Belongs to the PPase family.</text>
</comment>
<feature type="chain" id="PRO_0000137521" description="Inorganic pyrophosphatase 1">
    <location>
        <begin position="1"/>
        <end position="175"/>
    </location>
</feature>
<feature type="binding site" evidence="1">
    <location>
        <position position="30"/>
    </location>
    <ligand>
        <name>substrate</name>
    </ligand>
</feature>
<feature type="binding site" evidence="1">
    <location>
        <position position="44"/>
    </location>
    <ligand>
        <name>substrate</name>
    </ligand>
</feature>
<feature type="binding site" evidence="1">
    <location>
        <position position="56"/>
    </location>
    <ligand>
        <name>substrate</name>
    </ligand>
</feature>
<feature type="binding site" evidence="1">
    <location>
        <position position="66"/>
    </location>
    <ligand>
        <name>Mg(2+)</name>
        <dbReference type="ChEBI" id="CHEBI:18420"/>
        <label>1</label>
    </ligand>
</feature>
<feature type="binding site" evidence="1">
    <location>
        <position position="71"/>
    </location>
    <ligand>
        <name>Mg(2+)</name>
        <dbReference type="ChEBI" id="CHEBI:18420"/>
        <label>1</label>
    </ligand>
</feature>
<feature type="binding site" evidence="1">
    <location>
        <position position="71"/>
    </location>
    <ligand>
        <name>Mg(2+)</name>
        <dbReference type="ChEBI" id="CHEBI:18420"/>
        <label>2</label>
    </ligand>
</feature>
<feature type="binding site" evidence="1">
    <location>
        <position position="103"/>
    </location>
    <ligand>
        <name>Mg(2+)</name>
        <dbReference type="ChEBI" id="CHEBI:18420"/>
        <label>1</label>
    </ligand>
</feature>
<feature type="binding site" evidence="1">
    <location>
        <position position="142"/>
    </location>
    <ligand>
        <name>substrate</name>
    </ligand>
</feature>
<sequence length="175" mass="19445">MSYSKIPAGKDLPNDIYVAIEIPANHAPIKYEIDKDTDCLFVDRFMATPMFYPANYGFIPNTLADDGDPLDVLVVTPYPVTPGSVIRARPVGILHMTDDGGGDAKVIAVPHDKLSQLYVDVKEYTDLPALLLEQIKHFFENYKDLEKGKWVKIEGWGNADAARAEIMKSVEAFKG</sequence>
<accession>Q889M7</accession>
<dbReference type="EC" id="3.6.1.1" evidence="1"/>
<dbReference type="EMBL" id="AE016853">
    <property type="protein sequence ID" value="AAO54264.1"/>
    <property type="molecule type" value="Genomic_DNA"/>
</dbReference>
<dbReference type="RefSeq" id="NP_790569.1">
    <property type="nucleotide sequence ID" value="NC_004578.1"/>
</dbReference>
<dbReference type="SMR" id="Q889M7"/>
<dbReference type="STRING" id="223283.PSPTO_0722"/>
<dbReference type="KEGG" id="pst:PSPTO_0722"/>
<dbReference type="PATRIC" id="fig|223283.9.peg.730"/>
<dbReference type="eggNOG" id="COG0221">
    <property type="taxonomic scope" value="Bacteria"/>
</dbReference>
<dbReference type="HOGENOM" id="CLU_073198_1_0_6"/>
<dbReference type="OrthoDB" id="5187599at2"/>
<dbReference type="PhylomeDB" id="Q889M7"/>
<dbReference type="Proteomes" id="UP000002515">
    <property type="component" value="Chromosome"/>
</dbReference>
<dbReference type="GO" id="GO:0005737">
    <property type="term" value="C:cytoplasm"/>
    <property type="evidence" value="ECO:0007669"/>
    <property type="project" value="UniProtKB-SubCell"/>
</dbReference>
<dbReference type="GO" id="GO:0004427">
    <property type="term" value="F:inorganic diphosphate phosphatase activity"/>
    <property type="evidence" value="ECO:0007669"/>
    <property type="project" value="UniProtKB-UniRule"/>
</dbReference>
<dbReference type="GO" id="GO:0000287">
    <property type="term" value="F:magnesium ion binding"/>
    <property type="evidence" value="ECO:0007669"/>
    <property type="project" value="UniProtKB-UniRule"/>
</dbReference>
<dbReference type="GO" id="GO:0006796">
    <property type="term" value="P:phosphate-containing compound metabolic process"/>
    <property type="evidence" value="ECO:0007669"/>
    <property type="project" value="InterPro"/>
</dbReference>
<dbReference type="CDD" id="cd00412">
    <property type="entry name" value="pyrophosphatase"/>
    <property type="match status" value="1"/>
</dbReference>
<dbReference type="FunFam" id="3.90.80.10:FF:000001">
    <property type="entry name" value="Inorganic pyrophosphatase"/>
    <property type="match status" value="1"/>
</dbReference>
<dbReference type="Gene3D" id="3.90.80.10">
    <property type="entry name" value="Inorganic pyrophosphatase"/>
    <property type="match status" value="1"/>
</dbReference>
<dbReference type="HAMAP" id="MF_00209">
    <property type="entry name" value="Inorganic_PPase"/>
    <property type="match status" value="1"/>
</dbReference>
<dbReference type="InterPro" id="IPR008162">
    <property type="entry name" value="Pyrophosphatase"/>
</dbReference>
<dbReference type="InterPro" id="IPR036649">
    <property type="entry name" value="Pyrophosphatase_sf"/>
</dbReference>
<dbReference type="NCBIfam" id="NF002317">
    <property type="entry name" value="PRK01250.1"/>
    <property type="match status" value="1"/>
</dbReference>
<dbReference type="PANTHER" id="PTHR10286">
    <property type="entry name" value="INORGANIC PYROPHOSPHATASE"/>
    <property type="match status" value="1"/>
</dbReference>
<dbReference type="Pfam" id="PF00719">
    <property type="entry name" value="Pyrophosphatase"/>
    <property type="match status" value="1"/>
</dbReference>
<dbReference type="SUPFAM" id="SSF50324">
    <property type="entry name" value="Inorganic pyrophosphatase"/>
    <property type="match status" value="1"/>
</dbReference>
<dbReference type="PROSITE" id="PS00387">
    <property type="entry name" value="PPASE"/>
    <property type="match status" value="1"/>
</dbReference>